<organism>
    <name type="scientific">Arabidopsis thaliana</name>
    <name type="common">Mouse-ear cress</name>
    <dbReference type="NCBI Taxonomy" id="3702"/>
    <lineage>
        <taxon>Eukaryota</taxon>
        <taxon>Viridiplantae</taxon>
        <taxon>Streptophyta</taxon>
        <taxon>Embryophyta</taxon>
        <taxon>Tracheophyta</taxon>
        <taxon>Spermatophyta</taxon>
        <taxon>Magnoliopsida</taxon>
        <taxon>eudicotyledons</taxon>
        <taxon>Gunneridae</taxon>
        <taxon>Pentapetalae</taxon>
        <taxon>rosids</taxon>
        <taxon>malvids</taxon>
        <taxon>Brassicales</taxon>
        <taxon>Brassicaceae</taxon>
        <taxon>Camelineae</taxon>
        <taxon>Arabidopsis</taxon>
    </lineage>
</organism>
<feature type="chain" id="PRO_0000212764" description="Probable disease resistance protein At5g43730">
    <location>
        <begin position="1"/>
        <end position="848"/>
    </location>
</feature>
<feature type="domain" description="NB-ARC">
    <location>
        <begin position="137"/>
        <end position="439"/>
    </location>
</feature>
<feature type="repeat" description="LRR 1">
    <location>
        <begin position="534"/>
        <end position="555"/>
    </location>
</feature>
<feature type="repeat" description="LRR 2">
    <location>
        <begin position="558"/>
        <end position="580"/>
    </location>
</feature>
<feature type="repeat" description="LRR 3">
    <location>
        <begin position="582"/>
        <end position="604"/>
    </location>
</feature>
<feature type="repeat" description="LRR 4">
    <location>
        <begin position="605"/>
        <end position="627"/>
    </location>
</feature>
<feature type="repeat" description="LRR 5">
    <location>
        <begin position="629"/>
        <end position="649"/>
    </location>
</feature>
<feature type="coiled-coil region" evidence="2">
    <location>
        <begin position="25"/>
        <end position="62"/>
    </location>
</feature>
<feature type="binding site" evidence="2">
    <location>
        <begin position="179"/>
        <end position="186"/>
    </location>
    <ligand>
        <name>ATP</name>
        <dbReference type="ChEBI" id="CHEBI:30616"/>
    </ligand>
</feature>
<evidence type="ECO:0000250" key="1"/>
<evidence type="ECO:0000255" key="2"/>
<evidence type="ECO:0000305" key="3"/>
<accession>Q9FG91</accession>
<accession>Q0WKV2</accession>
<comment type="function">
    <text evidence="1">Probable disease resistance protein.</text>
</comment>
<comment type="domain">
    <text evidence="1">The LRR repeats probably act as specificity determinant of pathogen recognition.</text>
</comment>
<comment type="similarity">
    <text evidence="3">Belongs to the disease resistance NB-LRR family.</text>
</comment>
<comment type="online information" name="NIB-LRRS">
    <link uri="http://niblrrs.ucdavis.edu"/>
    <text>Functional and comparative genomics of disease resistance gene homologs</text>
</comment>
<gene>
    <name type="ordered locus">At5g43730</name>
    <name type="ORF">MQD19.6</name>
</gene>
<name>DRL32_ARATH</name>
<proteinExistence type="evidence at transcript level"/>
<sequence>MVDWLSLLPWNKIFTAACGCFLSDSNYIHLMESNLDALQKTMEELKNGRDDLLARVSIEEDKGLQRLALVNGWLSRVQIVESEFKDLLEAMSIETGRLCLFGYCSEDCISSYNYGGKVMKNLEEVKELLSKKNFEVVAQKIIPKAEKKHIQTTVGLDTMVGIAWESLIDDEIRTLGLYGMGGIGKTTLLESLNNKFVELESEFDVVIWVVVSKDFQLEGIQDQILGRLRPDKEWERETESKKASLINNNLKRKKFVLLLDDLWSEVDLIKIGVPPPSRENGSKIVFTTRSKEVCKHMKADKQIKVDCLSPDEAWELFRLTVGDIILRSHQDIPALARIVAAKCHGLPLALNVIGKAMVCKETVQEWRHAINVLNSPGHKFPGMEERILPILKFSYDSLKNGEIKLCFLYCSLFPEDFEIEKDKLIEYWICEGYINPNRYEDGGTNQGYDIIGLLVRAHLLIECELTDKVKMHDVIREMALWINSDFGNQQETICVKSGAHVRLIPNDISWEIVRQMSLISTQVEKIACSPNCPNLSTLLLPYNKLVDISVGFFLFMPKLVVLDLSTNWSLIELPEEISNLGSLQYLNLSLTGIKSLPVGLKKLRKLIYLNLEFTNVLESLVGIATTLPNLQVLKLFYSLFCVDDIIMEELQRLKHLKILTATIEDAMILERVQGVDRLASSIRGLCLRNMSAPRVILNSVALGGLQQLGIVSCNISEIEIDWLSKERRDHRSTSSPGFKQLASITVIGLVGPRDLSWLLFAQNLKDIQVQYSPTIEEIINKQKGMSITKVHRDIVVPFGKLESLHLYQLAELTEICWNYQTLPNLRESYVNYCPKLLEDIANFPKLKG</sequence>
<protein>
    <recommendedName>
        <fullName>Probable disease resistance protein At5g43730</fullName>
    </recommendedName>
</protein>
<dbReference type="EMBL" id="AB026651">
    <property type="protein sequence ID" value="BAB11300.1"/>
    <property type="molecule type" value="Genomic_DNA"/>
</dbReference>
<dbReference type="EMBL" id="CP002688">
    <property type="protein sequence ID" value="AED95001.1"/>
    <property type="molecule type" value="Genomic_DNA"/>
</dbReference>
<dbReference type="EMBL" id="CP002688">
    <property type="protein sequence ID" value="ANM69330.1"/>
    <property type="molecule type" value="Genomic_DNA"/>
</dbReference>
<dbReference type="EMBL" id="CP002688">
    <property type="protein sequence ID" value="ANM69331.1"/>
    <property type="molecule type" value="Genomic_DNA"/>
</dbReference>
<dbReference type="EMBL" id="CP002688">
    <property type="protein sequence ID" value="ANM69332.1"/>
    <property type="molecule type" value="Genomic_DNA"/>
</dbReference>
<dbReference type="EMBL" id="CP002688">
    <property type="protein sequence ID" value="ANM69333.1"/>
    <property type="molecule type" value="Genomic_DNA"/>
</dbReference>
<dbReference type="EMBL" id="AK230460">
    <property type="protein sequence ID" value="BAF02255.1"/>
    <property type="molecule type" value="mRNA"/>
</dbReference>
<dbReference type="RefSeq" id="NP_001318737.1">
    <property type="nucleotide sequence ID" value="NM_001344501.1"/>
</dbReference>
<dbReference type="RefSeq" id="NP_001331020.1">
    <property type="nucleotide sequence ID" value="NM_001344502.1"/>
</dbReference>
<dbReference type="RefSeq" id="NP_001331021.1">
    <property type="nucleotide sequence ID" value="NM_001344504.1"/>
</dbReference>
<dbReference type="RefSeq" id="NP_001331022.1">
    <property type="nucleotide sequence ID" value="NM_001344503.1"/>
</dbReference>
<dbReference type="RefSeq" id="NP_199186.1">
    <property type="nucleotide sequence ID" value="NM_123739.3"/>
</dbReference>
<dbReference type="SMR" id="Q9FG91"/>
<dbReference type="FunCoup" id="Q9FG91">
    <property type="interactions" value="19"/>
</dbReference>
<dbReference type="STRING" id="3702.Q9FG91"/>
<dbReference type="PaxDb" id="3702-AT5G43730.1"/>
<dbReference type="ProteomicsDB" id="224330"/>
<dbReference type="EnsemblPlants" id="AT5G43730.1">
    <property type="protein sequence ID" value="AT5G43730.1"/>
    <property type="gene ID" value="AT5G43730"/>
</dbReference>
<dbReference type="EnsemblPlants" id="AT5G43730.2">
    <property type="protein sequence ID" value="AT5G43730.2"/>
    <property type="gene ID" value="AT5G43730"/>
</dbReference>
<dbReference type="EnsemblPlants" id="AT5G43730.3">
    <property type="protein sequence ID" value="AT5G43730.3"/>
    <property type="gene ID" value="AT5G43730"/>
</dbReference>
<dbReference type="EnsemblPlants" id="AT5G43730.4">
    <property type="protein sequence ID" value="AT5G43730.4"/>
    <property type="gene ID" value="AT5G43730"/>
</dbReference>
<dbReference type="EnsemblPlants" id="AT5G43730.5">
    <property type="protein sequence ID" value="AT5G43730.5"/>
    <property type="gene ID" value="AT5G43730"/>
</dbReference>
<dbReference type="GeneID" id="834393"/>
<dbReference type="Gramene" id="AT5G43730.1">
    <property type="protein sequence ID" value="AT5G43730.1"/>
    <property type="gene ID" value="AT5G43730"/>
</dbReference>
<dbReference type="Gramene" id="AT5G43730.2">
    <property type="protein sequence ID" value="AT5G43730.2"/>
    <property type="gene ID" value="AT5G43730"/>
</dbReference>
<dbReference type="Gramene" id="AT5G43730.3">
    <property type="protein sequence ID" value="AT5G43730.3"/>
    <property type="gene ID" value="AT5G43730"/>
</dbReference>
<dbReference type="Gramene" id="AT5G43730.4">
    <property type="protein sequence ID" value="AT5G43730.4"/>
    <property type="gene ID" value="AT5G43730"/>
</dbReference>
<dbReference type="Gramene" id="AT5G43730.5">
    <property type="protein sequence ID" value="AT5G43730.5"/>
    <property type="gene ID" value="AT5G43730"/>
</dbReference>
<dbReference type="KEGG" id="ath:AT5G43730"/>
<dbReference type="Araport" id="AT5G43730"/>
<dbReference type="TAIR" id="AT5G43730">
    <property type="gene designation" value="RSG2"/>
</dbReference>
<dbReference type="eggNOG" id="KOG4658">
    <property type="taxonomic scope" value="Eukaryota"/>
</dbReference>
<dbReference type="HOGENOM" id="CLU_000427_4_0_1"/>
<dbReference type="InParanoid" id="Q9FG91"/>
<dbReference type="OMA" id="SHECGEL"/>
<dbReference type="PhylomeDB" id="Q9FG91"/>
<dbReference type="PRO" id="PR:Q9FG91"/>
<dbReference type="Proteomes" id="UP000006548">
    <property type="component" value="Chromosome 5"/>
</dbReference>
<dbReference type="ExpressionAtlas" id="Q9FG91">
    <property type="expression patterns" value="baseline and differential"/>
</dbReference>
<dbReference type="GO" id="GO:0043531">
    <property type="term" value="F:ADP binding"/>
    <property type="evidence" value="ECO:0007669"/>
    <property type="project" value="InterPro"/>
</dbReference>
<dbReference type="GO" id="GO:0005524">
    <property type="term" value="F:ATP binding"/>
    <property type="evidence" value="ECO:0007669"/>
    <property type="project" value="UniProtKB-KW"/>
</dbReference>
<dbReference type="GO" id="GO:0006952">
    <property type="term" value="P:defense response"/>
    <property type="evidence" value="ECO:0007669"/>
    <property type="project" value="UniProtKB-KW"/>
</dbReference>
<dbReference type="FunFam" id="3.80.10.10:FF:000834">
    <property type="entry name" value="Probable disease resistance protein At1g15890"/>
    <property type="match status" value="1"/>
</dbReference>
<dbReference type="FunFam" id="3.40.50.300:FF:001091">
    <property type="entry name" value="Probable disease resistance protein At1g61300"/>
    <property type="match status" value="1"/>
</dbReference>
<dbReference type="FunFam" id="1.10.10.10:FF:000322">
    <property type="entry name" value="Probable disease resistance protein At1g63360"/>
    <property type="match status" value="1"/>
</dbReference>
<dbReference type="FunFam" id="1.10.8.430:FF:000003">
    <property type="entry name" value="Probable disease resistance protein At5g66910"/>
    <property type="match status" value="1"/>
</dbReference>
<dbReference type="Gene3D" id="1.10.8.430">
    <property type="entry name" value="Helical domain of apoptotic protease-activating factors"/>
    <property type="match status" value="1"/>
</dbReference>
<dbReference type="Gene3D" id="3.40.50.300">
    <property type="entry name" value="P-loop containing nucleotide triphosphate hydrolases"/>
    <property type="match status" value="1"/>
</dbReference>
<dbReference type="Gene3D" id="3.80.10.10">
    <property type="entry name" value="Ribonuclease Inhibitor"/>
    <property type="match status" value="1"/>
</dbReference>
<dbReference type="Gene3D" id="1.10.10.10">
    <property type="entry name" value="Winged helix-like DNA-binding domain superfamily/Winged helix DNA-binding domain"/>
    <property type="match status" value="1"/>
</dbReference>
<dbReference type="InterPro" id="IPR042197">
    <property type="entry name" value="Apaf_helical"/>
</dbReference>
<dbReference type="InterPro" id="IPR032675">
    <property type="entry name" value="LRR_dom_sf"/>
</dbReference>
<dbReference type="InterPro" id="IPR055414">
    <property type="entry name" value="LRR_R13L4/SHOC2-like"/>
</dbReference>
<dbReference type="InterPro" id="IPR002182">
    <property type="entry name" value="NB-ARC"/>
</dbReference>
<dbReference type="InterPro" id="IPR027417">
    <property type="entry name" value="P-loop_NTPase"/>
</dbReference>
<dbReference type="InterPro" id="IPR050905">
    <property type="entry name" value="Plant_NBS-LRR"/>
</dbReference>
<dbReference type="InterPro" id="IPR036388">
    <property type="entry name" value="WH-like_DNA-bd_sf"/>
</dbReference>
<dbReference type="PANTHER" id="PTHR33463:SF220">
    <property type="entry name" value="NB-ARC DOMAIN-CONTAINING PROTEIN"/>
    <property type="match status" value="1"/>
</dbReference>
<dbReference type="PANTHER" id="PTHR33463">
    <property type="entry name" value="NB-ARC DOMAIN-CONTAINING PROTEIN-RELATED"/>
    <property type="match status" value="1"/>
</dbReference>
<dbReference type="Pfam" id="PF23598">
    <property type="entry name" value="LRR_14"/>
    <property type="match status" value="1"/>
</dbReference>
<dbReference type="Pfam" id="PF00931">
    <property type="entry name" value="NB-ARC"/>
    <property type="match status" value="1"/>
</dbReference>
<dbReference type="Pfam" id="PF23559">
    <property type="entry name" value="WH_DRP"/>
    <property type="match status" value="1"/>
</dbReference>
<dbReference type="PRINTS" id="PR00364">
    <property type="entry name" value="DISEASERSIST"/>
</dbReference>
<dbReference type="SUPFAM" id="SSF52058">
    <property type="entry name" value="L domain-like"/>
    <property type="match status" value="1"/>
</dbReference>
<dbReference type="SUPFAM" id="SSF52540">
    <property type="entry name" value="P-loop containing nucleoside triphosphate hydrolases"/>
    <property type="match status" value="1"/>
</dbReference>
<reference key="1">
    <citation type="submission" date="1999-04" db="EMBL/GenBank/DDBJ databases">
        <title>Structural analysis of Arabidopsis thaliana chromosome 5. XI.</title>
        <authorList>
            <person name="Kaneko T."/>
            <person name="Katoh T."/>
            <person name="Asamizu E."/>
            <person name="Sato S."/>
            <person name="Nakamura Y."/>
            <person name="Kotani H."/>
            <person name="Tabata S."/>
        </authorList>
    </citation>
    <scope>NUCLEOTIDE SEQUENCE [LARGE SCALE GENOMIC DNA]</scope>
    <source>
        <strain>cv. Columbia</strain>
    </source>
</reference>
<reference key="2">
    <citation type="journal article" date="2017" name="Plant J.">
        <title>Araport11: a complete reannotation of the Arabidopsis thaliana reference genome.</title>
        <authorList>
            <person name="Cheng C.Y."/>
            <person name="Krishnakumar V."/>
            <person name="Chan A.P."/>
            <person name="Thibaud-Nissen F."/>
            <person name="Schobel S."/>
            <person name="Town C.D."/>
        </authorList>
    </citation>
    <scope>GENOME REANNOTATION</scope>
    <source>
        <strain>cv. Columbia</strain>
    </source>
</reference>
<reference key="3">
    <citation type="submission" date="2006-07" db="EMBL/GenBank/DDBJ databases">
        <title>Large-scale analysis of RIKEN Arabidopsis full-length (RAFL) cDNAs.</title>
        <authorList>
            <person name="Totoki Y."/>
            <person name="Seki M."/>
            <person name="Ishida J."/>
            <person name="Nakajima M."/>
            <person name="Enju A."/>
            <person name="Kamiya A."/>
            <person name="Narusaka M."/>
            <person name="Shin-i T."/>
            <person name="Nakagawa M."/>
            <person name="Sakamoto N."/>
            <person name="Oishi K."/>
            <person name="Kohara Y."/>
            <person name="Kobayashi M."/>
            <person name="Toyoda A."/>
            <person name="Sakaki Y."/>
            <person name="Sakurai T."/>
            <person name="Iida K."/>
            <person name="Akiyama K."/>
            <person name="Satou M."/>
            <person name="Toyoda T."/>
            <person name="Konagaya A."/>
            <person name="Carninci P."/>
            <person name="Kawai J."/>
            <person name="Hayashizaki Y."/>
            <person name="Shinozaki K."/>
        </authorList>
    </citation>
    <scope>NUCLEOTIDE SEQUENCE [LARGE SCALE MRNA]</scope>
    <source>
        <strain>cv. Columbia</strain>
    </source>
</reference>
<keyword id="KW-0067">ATP-binding</keyword>
<keyword id="KW-0175">Coiled coil</keyword>
<keyword id="KW-0433">Leucine-rich repeat</keyword>
<keyword id="KW-0547">Nucleotide-binding</keyword>
<keyword id="KW-0611">Plant defense</keyword>
<keyword id="KW-1185">Reference proteome</keyword>
<keyword id="KW-0677">Repeat</keyword>